<dbReference type="EC" id="2.4.3.-" evidence="1"/>
<dbReference type="EC" id="2.4.3.8" evidence="4"/>
<dbReference type="EMBL" id="X80502">
    <property type="protein sequence ID" value="CAA56665.1"/>
    <property type="molecule type" value="mRNA"/>
</dbReference>
<dbReference type="EMBL" id="AK133780">
    <property type="protein sequence ID" value="BAE21835.1"/>
    <property type="molecule type" value="mRNA"/>
</dbReference>
<dbReference type="EMBL" id="AK134678">
    <property type="protein sequence ID" value="BAE22237.1"/>
    <property type="molecule type" value="mRNA"/>
</dbReference>
<dbReference type="EMBL" id="CH466528">
    <property type="protein sequence ID" value="EDL09712.1"/>
    <property type="molecule type" value="Genomic_DNA"/>
</dbReference>
<dbReference type="EMBL" id="BC075645">
    <property type="protein sequence ID" value="AAH75645.1"/>
    <property type="molecule type" value="mRNA"/>
</dbReference>
<dbReference type="CCDS" id="CCDS29301.1"/>
<dbReference type="PIR" id="A56950">
    <property type="entry name" value="A56950"/>
</dbReference>
<dbReference type="RefSeq" id="NP_033208.2">
    <property type="nucleotide sequence ID" value="NM_009182.3"/>
</dbReference>
<dbReference type="RefSeq" id="XP_030106227.1">
    <property type="nucleotide sequence ID" value="XM_030250367.2"/>
</dbReference>
<dbReference type="SMR" id="Q64689"/>
<dbReference type="FunCoup" id="Q64689">
    <property type="interactions" value="46"/>
</dbReference>
<dbReference type="STRING" id="10090.ENSMUSP00000025477"/>
<dbReference type="CAZy" id="GT29">
    <property type="family name" value="Glycosyltransferase Family 29"/>
</dbReference>
<dbReference type="GlyConnect" id="2707">
    <property type="glycosylation" value="5 N-Linked glycans (2 sites)"/>
</dbReference>
<dbReference type="GlyCosmos" id="Q64689">
    <property type="glycosylation" value="3 sites, 5 glycans"/>
</dbReference>
<dbReference type="GlyGen" id="Q64689">
    <property type="glycosylation" value="3 sites, 7 N-linked glycans (2 sites)"/>
</dbReference>
<dbReference type="iPTMnet" id="Q64689"/>
<dbReference type="PhosphoSitePlus" id="Q64689"/>
<dbReference type="SwissPalm" id="Q64689"/>
<dbReference type="PaxDb" id="10090-ENSMUSP00000025477"/>
<dbReference type="ProteomicsDB" id="261361"/>
<dbReference type="Antibodypedia" id="22809">
    <property type="antibodies" value="70 antibodies from 18 providers"/>
</dbReference>
<dbReference type="DNASU" id="20451"/>
<dbReference type="Ensembl" id="ENSMUST00000025477.15">
    <property type="protein sequence ID" value="ENSMUSP00000025477.8"/>
    <property type="gene ID" value="ENSMUSG00000056812.15"/>
</dbReference>
<dbReference type="Ensembl" id="ENSMUST00000237770.2">
    <property type="protein sequence ID" value="ENSMUSP00000158392.2"/>
    <property type="gene ID" value="ENSMUSG00000056812.15"/>
</dbReference>
<dbReference type="GeneID" id="20451"/>
<dbReference type="KEGG" id="mmu:20451"/>
<dbReference type="UCSC" id="uc008fed.1">
    <property type="organism name" value="mouse"/>
</dbReference>
<dbReference type="AGR" id="MGI:106019"/>
<dbReference type="CTD" id="51046"/>
<dbReference type="MGI" id="MGI:106019">
    <property type="gene designation" value="St8sia3"/>
</dbReference>
<dbReference type="VEuPathDB" id="HostDB:ENSMUSG00000056812"/>
<dbReference type="eggNOG" id="KOG2692">
    <property type="taxonomic scope" value="Eukaryota"/>
</dbReference>
<dbReference type="GeneTree" id="ENSGT01030000234535"/>
<dbReference type="HOGENOM" id="CLU_048583_0_0_1"/>
<dbReference type="InParanoid" id="Q64689"/>
<dbReference type="OMA" id="ILVGSQC"/>
<dbReference type="OrthoDB" id="10264956at2759"/>
<dbReference type="PhylomeDB" id="Q64689"/>
<dbReference type="TreeFam" id="TF323961"/>
<dbReference type="BRENDA" id="2.4.99.8">
    <property type="organism ID" value="3474"/>
</dbReference>
<dbReference type="Reactome" id="R-MMU-4085001">
    <property type="pathway name" value="Sialic acid metabolism"/>
</dbReference>
<dbReference type="Reactome" id="R-MMU-975577">
    <property type="pathway name" value="N-Glycan antennae elongation"/>
</dbReference>
<dbReference type="UniPathway" id="UPA00378"/>
<dbReference type="BioGRID-ORCS" id="20451">
    <property type="hits" value="0 hits in 78 CRISPR screens"/>
</dbReference>
<dbReference type="ChiTaRS" id="St8sia3">
    <property type="organism name" value="mouse"/>
</dbReference>
<dbReference type="PRO" id="PR:Q64689"/>
<dbReference type="Proteomes" id="UP000000589">
    <property type="component" value="Chromosome 18"/>
</dbReference>
<dbReference type="RNAct" id="Q64689">
    <property type="molecule type" value="protein"/>
</dbReference>
<dbReference type="Bgee" id="ENSMUSG00000056812">
    <property type="expression patterns" value="Expressed in caudate-putamen and 118 other cell types or tissues"/>
</dbReference>
<dbReference type="GO" id="GO:0000139">
    <property type="term" value="C:Golgi membrane"/>
    <property type="evidence" value="ECO:0007669"/>
    <property type="project" value="UniProtKB-SubCell"/>
</dbReference>
<dbReference type="GO" id="GO:0003828">
    <property type="term" value="F:alpha-N-acetylneuraminate alpha-2,8-sialyltransferase activity"/>
    <property type="evidence" value="ECO:0000314"/>
    <property type="project" value="MGI"/>
</dbReference>
<dbReference type="GO" id="GO:0042802">
    <property type="term" value="F:identical protein binding"/>
    <property type="evidence" value="ECO:0007669"/>
    <property type="project" value="Ensembl"/>
</dbReference>
<dbReference type="GO" id="GO:0008373">
    <property type="term" value="F:sialyltransferase activity"/>
    <property type="evidence" value="ECO:0000314"/>
    <property type="project" value="UniProtKB"/>
</dbReference>
<dbReference type="GO" id="GO:0001574">
    <property type="term" value="P:ganglioside biosynthetic process"/>
    <property type="evidence" value="ECO:0000314"/>
    <property type="project" value="UniProtKB"/>
</dbReference>
<dbReference type="GO" id="GO:0006491">
    <property type="term" value="P:N-glycan processing"/>
    <property type="evidence" value="ECO:0000250"/>
    <property type="project" value="UniProtKB"/>
</dbReference>
<dbReference type="GO" id="GO:0009311">
    <property type="term" value="P:oligosaccharide metabolic process"/>
    <property type="evidence" value="ECO:0007669"/>
    <property type="project" value="Ensembl"/>
</dbReference>
<dbReference type="GO" id="GO:0006486">
    <property type="term" value="P:protein glycosylation"/>
    <property type="evidence" value="ECO:0007669"/>
    <property type="project" value="UniProtKB-UniPathway"/>
</dbReference>
<dbReference type="GO" id="GO:0097503">
    <property type="term" value="P:sialylation"/>
    <property type="evidence" value="ECO:0000314"/>
    <property type="project" value="UniProtKB"/>
</dbReference>
<dbReference type="CDD" id="cd23970">
    <property type="entry name" value="GT29_ST8SIA3_oligo"/>
    <property type="match status" value="1"/>
</dbReference>
<dbReference type="FunFam" id="3.90.1480.20:FF:000001">
    <property type="entry name" value="ST8 alpha-N-acetyl-neuraminide alpha-2,8-sialyltransferase 2"/>
    <property type="match status" value="1"/>
</dbReference>
<dbReference type="Gene3D" id="3.90.1480.20">
    <property type="entry name" value="Glycosyl transferase family 29"/>
    <property type="match status" value="1"/>
</dbReference>
<dbReference type="InterPro" id="IPR001675">
    <property type="entry name" value="Glyco_trans_29"/>
</dbReference>
<dbReference type="InterPro" id="IPR050943">
    <property type="entry name" value="Glycosyltr_29_Sialyltrsf"/>
</dbReference>
<dbReference type="InterPro" id="IPR038578">
    <property type="entry name" value="GT29-like_sf"/>
</dbReference>
<dbReference type="InterPro" id="IPR012163">
    <property type="entry name" value="Sialyl_trans"/>
</dbReference>
<dbReference type="PANTHER" id="PTHR11987">
    <property type="entry name" value="ALPHA-2,8-SIALYLTRANSFERASE"/>
    <property type="match status" value="1"/>
</dbReference>
<dbReference type="PANTHER" id="PTHR11987:SF36">
    <property type="entry name" value="SIA-ALPHA-2,3-GAL-BETA-1,4-GLCNAC-R:ALPHA 2,8-SIALYLTRANSFERASE"/>
    <property type="match status" value="1"/>
</dbReference>
<dbReference type="Pfam" id="PF00777">
    <property type="entry name" value="Glyco_transf_29"/>
    <property type="match status" value="1"/>
</dbReference>
<dbReference type="PIRSF" id="PIRSF005557">
    <property type="entry name" value="Sialyl_trans"/>
    <property type="match status" value="1"/>
</dbReference>
<feature type="chain" id="PRO_0000149290" description="Alpha-N-acetylneuraminate alpha-2,8-sialyltransferase ST8SIA3">
    <location>
        <begin position="1"/>
        <end position="380"/>
    </location>
</feature>
<feature type="topological domain" description="Cytoplasmic" evidence="2">
    <location>
        <begin position="1"/>
        <end position="17"/>
    </location>
</feature>
<feature type="transmembrane region" description="Helical; Signal-anchor for type II membrane protein" evidence="2">
    <location>
        <begin position="18"/>
        <end position="33"/>
    </location>
</feature>
<feature type="topological domain" description="Lumenal" evidence="2">
    <location>
        <begin position="34"/>
        <end position="380"/>
    </location>
</feature>
<feature type="active site" description="Proton donor/acceptor" evidence="1">
    <location>
        <position position="354"/>
    </location>
</feature>
<feature type="binding site" evidence="1">
    <location>
        <position position="167"/>
    </location>
    <ligand>
        <name>CMP-N-acetyl-beta-neuraminate</name>
        <dbReference type="ChEBI" id="CHEBI:57812"/>
    </ligand>
</feature>
<feature type="binding site" evidence="1">
    <location>
        <position position="190"/>
    </location>
    <ligand>
        <name>CMP-N-acetyl-beta-neuraminate</name>
        <dbReference type="ChEBI" id="CHEBI:57812"/>
    </ligand>
</feature>
<feature type="binding site" evidence="1">
    <location>
        <position position="300"/>
    </location>
    <ligand>
        <name>CMP-N-acetyl-beta-neuraminate</name>
        <dbReference type="ChEBI" id="CHEBI:57812"/>
    </ligand>
</feature>
<feature type="binding site" evidence="1">
    <location>
        <position position="301"/>
    </location>
    <ligand>
        <name>CMP-N-acetyl-beta-neuraminate</name>
        <dbReference type="ChEBI" id="CHEBI:57812"/>
    </ligand>
</feature>
<feature type="binding site" evidence="1">
    <location>
        <position position="302"/>
    </location>
    <ligand>
        <name>CMP-N-acetyl-beta-neuraminate</name>
        <dbReference type="ChEBI" id="CHEBI:57812"/>
    </ligand>
</feature>
<feature type="binding site" evidence="1">
    <location>
        <position position="322"/>
    </location>
    <ligand>
        <name>CMP-N-acetyl-beta-neuraminate</name>
        <dbReference type="ChEBI" id="CHEBI:57812"/>
    </ligand>
</feature>
<feature type="binding site" evidence="1">
    <location>
        <position position="336"/>
    </location>
    <ligand>
        <name>CMP-N-acetyl-beta-neuraminate</name>
        <dbReference type="ChEBI" id="CHEBI:57812"/>
    </ligand>
</feature>
<feature type="binding site" evidence="1">
    <location>
        <position position="337"/>
    </location>
    <ligand>
        <name>CMP-N-acetyl-beta-neuraminate</name>
        <dbReference type="ChEBI" id="CHEBI:57812"/>
    </ligand>
</feature>
<feature type="glycosylation site" description="N-linked (GlcNAc...) asparagine" evidence="2">
    <location>
        <position position="93"/>
    </location>
</feature>
<feature type="glycosylation site" description="N-linked (GlcNAc...) asparagine" evidence="2">
    <location>
        <position position="113"/>
    </location>
</feature>
<feature type="glycosylation site" description="N-linked (GlcNAc...) asparagine" evidence="2">
    <location>
        <position position="206"/>
    </location>
</feature>
<feature type="disulfide bond" evidence="1">
    <location>
        <begin position="162"/>
        <end position="313"/>
    </location>
</feature>
<feature type="disulfide bond" evidence="1">
    <location>
        <begin position="176"/>
        <end position="379"/>
    </location>
</feature>
<feature type="sequence conflict" description="In Ref. 1; CAA56665." evidence="6" ref="1">
    <original>F</original>
    <variation>S</variation>
    <location>
        <position position="187"/>
    </location>
</feature>
<keyword id="KW-1015">Disulfide bond</keyword>
<keyword id="KW-0325">Glycoprotein</keyword>
<keyword id="KW-0328">Glycosyltransferase</keyword>
<keyword id="KW-0333">Golgi apparatus</keyword>
<keyword id="KW-0472">Membrane</keyword>
<keyword id="KW-1185">Reference proteome</keyword>
<keyword id="KW-0735">Signal-anchor</keyword>
<keyword id="KW-0808">Transferase</keyword>
<keyword id="KW-0812">Transmembrane</keyword>
<keyword id="KW-1133">Transmembrane helix</keyword>
<reference key="1">
    <citation type="journal article" date="1995" name="J. Biol. Chem.">
        <title>Molecular cloning of Sia alpha 2,3Gal beta 1,4GlcNAc alpha 2,8-sialyltransferase from mouse brain.</title>
        <authorList>
            <person name="Yoshida Y."/>
            <person name="Kojima N."/>
            <person name="Kurosawa N."/>
            <person name="Hamamoto T."/>
            <person name="Tsuji S."/>
        </authorList>
    </citation>
    <scope>NUCLEOTIDE SEQUENCE [MRNA]</scope>
    <scope>FUNCTION</scope>
    <scope>PATHWAY</scope>
    <scope>CATALYTIC ACTIVITY</scope>
    <scope>BIOPHYSICOCHEMICAL PROPERTIES</scope>
    <scope>TISSUE SPECIFICITY</scope>
    <scope>DEVELOPMENTAL STAGE</scope>
    <source>
        <tissue>Brain</tissue>
    </source>
</reference>
<reference key="2">
    <citation type="journal article" date="2005" name="Science">
        <title>The transcriptional landscape of the mammalian genome.</title>
        <authorList>
            <person name="Carninci P."/>
            <person name="Kasukawa T."/>
            <person name="Katayama S."/>
            <person name="Gough J."/>
            <person name="Frith M.C."/>
            <person name="Maeda N."/>
            <person name="Oyama R."/>
            <person name="Ravasi T."/>
            <person name="Lenhard B."/>
            <person name="Wells C."/>
            <person name="Kodzius R."/>
            <person name="Shimokawa K."/>
            <person name="Bajic V.B."/>
            <person name="Brenner S.E."/>
            <person name="Batalov S."/>
            <person name="Forrest A.R."/>
            <person name="Zavolan M."/>
            <person name="Davis M.J."/>
            <person name="Wilming L.G."/>
            <person name="Aidinis V."/>
            <person name="Allen J.E."/>
            <person name="Ambesi-Impiombato A."/>
            <person name="Apweiler R."/>
            <person name="Aturaliya R.N."/>
            <person name="Bailey T.L."/>
            <person name="Bansal M."/>
            <person name="Baxter L."/>
            <person name="Beisel K.W."/>
            <person name="Bersano T."/>
            <person name="Bono H."/>
            <person name="Chalk A.M."/>
            <person name="Chiu K.P."/>
            <person name="Choudhary V."/>
            <person name="Christoffels A."/>
            <person name="Clutterbuck D.R."/>
            <person name="Crowe M.L."/>
            <person name="Dalla E."/>
            <person name="Dalrymple B.P."/>
            <person name="de Bono B."/>
            <person name="Della Gatta G."/>
            <person name="di Bernardo D."/>
            <person name="Down T."/>
            <person name="Engstrom P."/>
            <person name="Fagiolini M."/>
            <person name="Faulkner G."/>
            <person name="Fletcher C.F."/>
            <person name="Fukushima T."/>
            <person name="Furuno M."/>
            <person name="Futaki S."/>
            <person name="Gariboldi M."/>
            <person name="Georgii-Hemming P."/>
            <person name="Gingeras T.R."/>
            <person name="Gojobori T."/>
            <person name="Green R.E."/>
            <person name="Gustincich S."/>
            <person name="Harbers M."/>
            <person name="Hayashi Y."/>
            <person name="Hensch T.K."/>
            <person name="Hirokawa N."/>
            <person name="Hill D."/>
            <person name="Huminiecki L."/>
            <person name="Iacono M."/>
            <person name="Ikeo K."/>
            <person name="Iwama A."/>
            <person name="Ishikawa T."/>
            <person name="Jakt M."/>
            <person name="Kanapin A."/>
            <person name="Katoh M."/>
            <person name="Kawasawa Y."/>
            <person name="Kelso J."/>
            <person name="Kitamura H."/>
            <person name="Kitano H."/>
            <person name="Kollias G."/>
            <person name="Krishnan S.P."/>
            <person name="Kruger A."/>
            <person name="Kummerfeld S.K."/>
            <person name="Kurochkin I.V."/>
            <person name="Lareau L.F."/>
            <person name="Lazarevic D."/>
            <person name="Lipovich L."/>
            <person name="Liu J."/>
            <person name="Liuni S."/>
            <person name="McWilliam S."/>
            <person name="Madan Babu M."/>
            <person name="Madera M."/>
            <person name="Marchionni L."/>
            <person name="Matsuda H."/>
            <person name="Matsuzawa S."/>
            <person name="Miki H."/>
            <person name="Mignone F."/>
            <person name="Miyake S."/>
            <person name="Morris K."/>
            <person name="Mottagui-Tabar S."/>
            <person name="Mulder N."/>
            <person name="Nakano N."/>
            <person name="Nakauchi H."/>
            <person name="Ng P."/>
            <person name="Nilsson R."/>
            <person name="Nishiguchi S."/>
            <person name="Nishikawa S."/>
            <person name="Nori F."/>
            <person name="Ohara O."/>
            <person name="Okazaki Y."/>
            <person name="Orlando V."/>
            <person name="Pang K.C."/>
            <person name="Pavan W.J."/>
            <person name="Pavesi G."/>
            <person name="Pesole G."/>
            <person name="Petrovsky N."/>
            <person name="Piazza S."/>
            <person name="Reed J."/>
            <person name="Reid J.F."/>
            <person name="Ring B.Z."/>
            <person name="Ringwald M."/>
            <person name="Rost B."/>
            <person name="Ruan Y."/>
            <person name="Salzberg S.L."/>
            <person name="Sandelin A."/>
            <person name="Schneider C."/>
            <person name="Schoenbach C."/>
            <person name="Sekiguchi K."/>
            <person name="Semple C.A."/>
            <person name="Seno S."/>
            <person name="Sessa L."/>
            <person name="Sheng Y."/>
            <person name="Shibata Y."/>
            <person name="Shimada H."/>
            <person name="Shimada K."/>
            <person name="Silva D."/>
            <person name="Sinclair B."/>
            <person name="Sperling S."/>
            <person name="Stupka E."/>
            <person name="Sugiura K."/>
            <person name="Sultana R."/>
            <person name="Takenaka Y."/>
            <person name="Taki K."/>
            <person name="Tammoja K."/>
            <person name="Tan S.L."/>
            <person name="Tang S."/>
            <person name="Taylor M.S."/>
            <person name="Tegner J."/>
            <person name="Teichmann S.A."/>
            <person name="Ueda H.R."/>
            <person name="van Nimwegen E."/>
            <person name="Verardo R."/>
            <person name="Wei C.L."/>
            <person name="Yagi K."/>
            <person name="Yamanishi H."/>
            <person name="Zabarovsky E."/>
            <person name="Zhu S."/>
            <person name="Zimmer A."/>
            <person name="Hide W."/>
            <person name="Bult C."/>
            <person name="Grimmond S.M."/>
            <person name="Teasdale R.D."/>
            <person name="Liu E.T."/>
            <person name="Brusic V."/>
            <person name="Quackenbush J."/>
            <person name="Wahlestedt C."/>
            <person name="Mattick J.S."/>
            <person name="Hume D.A."/>
            <person name="Kai C."/>
            <person name="Sasaki D."/>
            <person name="Tomaru Y."/>
            <person name="Fukuda S."/>
            <person name="Kanamori-Katayama M."/>
            <person name="Suzuki M."/>
            <person name="Aoki J."/>
            <person name="Arakawa T."/>
            <person name="Iida J."/>
            <person name="Imamura K."/>
            <person name="Itoh M."/>
            <person name="Kato T."/>
            <person name="Kawaji H."/>
            <person name="Kawagashira N."/>
            <person name="Kawashima T."/>
            <person name="Kojima M."/>
            <person name="Kondo S."/>
            <person name="Konno H."/>
            <person name="Nakano K."/>
            <person name="Ninomiya N."/>
            <person name="Nishio T."/>
            <person name="Okada M."/>
            <person name="Plessy C."/>
            <person name="Shibata K."/>
            <person name="Shiraki T."/>
            <person name="Suzuki S."/>
            <person name="Tagami M."/>
            <person name="Waki K."/>
            <person name="Watahiki A."/>
            <person name="Okamura-Oho Y."/>
            <person name="Suzuki H."/>
            <person name="Kawai J."/>
            <person name="Hayashizaki Y."/>
        </authorList>
    </citation>
    <scope>NUCLEOTIDE SEQUENCE [LARGE SCALE MRNA]</scope>
    <source>
        <strain>C57BL/6J</strain>
        <tissue>Medulla oblongata</tissue>
    </source>
</reference>
<reference key="3">
    <citation type="submission" date="2005-09" db="EMBL/GenBank/DDBJ databases">
        <authorList>
            <person name="Mural R.J."/>
            <person name="Adams M.D."/>
            <person name="Myers E.W."/>
            <person name="Smith H.O."/>
            <person name="Venter J.C."/>
        </authorList>
    </citation>
    <scope>NUCLEOTIDE SEQUENCE [LARGE SCALE GENOMIC DNA]</scope>
</reference>
<reference key="4">
    <citation type="journal article" date="2004" name="Genome Res.">
        <title>The status, quality, and expansion of the NIH full-length cDNA project: the Mammalian Gene Collection (MGC).</title>
        <authorList>
            <consortium name="The MGC Project Team"/>
        </authorList>
    </citation>
    <scope>NUCLEOTIDE SEQUENCE [LARGE SCALE MRNA]</scope>
    <source>
        <strain>C57BL/6J</strain>
        <tissue>Brain</tissue>
    </source>
</reference>
<reference key="5">
    <citation type="journal article" date="2019" name="Transl. Psychiatry">
        <title>Functional roles of ST8SIA3-mediated sialylation of striatal dopamine D2 and adenosine A2A receptors.</title>
        <authorList>
            <person name="Lin C.Y."/>
            <person name="Lai H.L."/>
            <person name="Chen H.M."/>
            <person name="Siew J.J."/>
            <person name="Hsiao C.T."/>
            <person name="Chang H.C."/>
            <person name="Liao K.S."/>
            <person name="Tsai S.C."/>
            <person name="Wu C.Y."/>
            <person name="Kitajima K."/>
            <person name="Sato C."/>
            <person name="Khoo K.H."/>
            <person name="Chern Y."/>
        </authorList>
    </citation>
    <scope>FUNCTION</scope>
    <scope>TISSUE SPECIFICITY</scope>
</reference>
<accession>Q64689</accession>
<accession>Q6DIB7</accession>
<organism>
    <name type="scientific">Mus musculus</name>
    <name type="common">Mouse</name>
    <dbReference type="NCBI Taxonomy" id="10090"/>
    <lineage>
        <taxon>Eukaryota</taxon>
        <taxon>Metazoa</taxon>
        <taxon>Chordata</taxon>
        <taxon>Craniata</taxon>
        <taxon>Vertebrata</taxon>
        <taxon>Euteleostomi</taxon>
        <taxon>Mammalia</taxon>
        <taxon>Eutheria</taxon>
        <taxon>Euarchontoglires</taxon>
        <taxon>Glires</taxon>
        <taxon>Rodentia</taxon>
        <taxon>Myomorpha</taxon>
        <taxon>Muroidea</taxon>
        <taxon>Muridae</taxon>
        <taxon>Murinae</taxon>
        <taxon>Mus</taxon>
        <taxon>Mus</taxon>
    </lineage>
</organism>
<proteinExistence type="evidence at protein level"/>
<name>SIA8C_MOUSE</name>
<evidence type="ECO:0000250" key="1">
    <source>
        <dbReference type="UniProtKB" id="O43173"/>
    </source>
</evidence>
<evidence type="ECO:0000255" key="2"/>
<evidence type="ECO:0000269" key="3">
    <source>
    </source>
</evidence>
<evidence type="ECO:0000269" key="4">
    <source>
    </source>
</evidence>
<evidence type="ECO:0000303" key="5">
    <source>
    </source>
</evidence>
<evidence type="ECO:0000305" key="6"/>
<evidence type="ECO:0000312" key="7">
    <source>
        <dbReference type="MGI" id="MGI:106019"/>
    </source>
</evidence>
<protein>
    <recommendedName>
        <fullName evidence="6">Alpha-N-acetylneuraminate alpha-2,8-sialyltransferase ST8SIA3</fullName>
        <ecNumber evidence="1">2.4.3.-</ecNumber>
    </recommendedName>
    <alternativeName>
        <fullName>Alpha-2,8-sialyltransferase 8C</fullName>
    </alternativeName>
    <alternativeName>
        <fullName>Alpha-2,8-sialyltransferase III</fullName>
    </alternativeName>
    <alternativeName>
        <fullName>Ganglioside GD3 synthase ST8SIA3</fullName>
        <ecNumber evidence="4">2.4.3.8</ecNumber>
    </alternativeName>
    <alternativeName>
        <fullName>ST8 alpha-N-acetyl-neuraminide alpha-2,8-sialyltransferase 3</fullName>
    </alternativeName>
    <alternativeName>
        <fullName evidence="5">Sia alpha 2,3Gal beta 1,4GlcNAc alpha 2,8-sialyltransferase</fullName>
    </alternativeName>
    <alternativeName>
        <fullName>Sialyltransferase 8C</fullName>
        <shortName>SIAT8-C</shortName>
    </alternativeName>
    <alternativeName>
        <fullName>Sialyltransferase St8Sia III</fullName>
        <shortName>ST8SiaIII</shortName>
    </alternativeName>
</protein>
<sequence>MRNCKMARVASVLGLVMLSVALLILSLISYVSLKKENIFTTPKYASPGAPRMYMFHAGFRSQFALKFLDQSFVPITNSLTHELQEKPSKWTFNRTAFLHQRQEILQHVDVIKNFSLTKSSVRIGQLMHYDYSSHKYVFSISNNFRSLLPDVSPIMNKRYNVCAVVGNSGILTGSQCGQEIDKSDFVFRCNFAPTEAFHKDVGRKTNLTTFNPSILEKYYNNLLTIQDRNNFFLSLKKLDGAILWIPAFFFHTSATVTRTLVDFFVEHRGQLKVQLAWPGNIMQHVNRYWKNKHLSPKRLSTGILMYTLASAICEEIHLYGFWPFGFDPNTREDLPYHYYDKKGTKFTTKWQESHQLPAEFQLLYRMHGEGLTKLTLSHCA</sequence>
<comment type="function">
    <text evidence="1 3 4">Catalyzes the transfer of sialic acid from a CMP-linked sialic acid donor onto a terminal alpha-2,3-, alpha-2,6-, or alpha-2,8-linked sialic acid of an acceptor, such as N-linked oligosaccharides of glycoproteins and glycolipids through alpha-2,8-linkages (PubMed:7782326). Forms oligosialic and polysialic acid on various sialylated N-acetyllactosamine oligosaccharides of glycoproteins, including FETUB N-glycans, a2-HS-glycoprotein (AHSG) and alpha 2,3-sialylated glycosphingolipids, such as alpha 2,3-sialylparagloboside and ganglioside GM3 and to a lesser extent NCAM1 N-glycans (PubMed:7782326). However, it is much more specific to N-linked oligosaccharides of glycoproteins than glycosphingolipids (PubMed:7782326). 2,3-sialylparagloboside served as the best acceptor substrate among the glycolipids (PubMed:7782326). alpha-Neu5Ac-(2-&gt;8)-alpha-Neu5Ac-(2-&gt;3)-beta-D-Gal-(1-&gt;4)-6S-D-GlcNAc and monosialyl and disialyl N-acetyllactosamines are the best acceptor substrates among glycoproteins (By similarity). May play critical role in the striatum by mediating the formation of disialylated and trisialylated terminal glycotopes on N- and O-glycans of specific striatal proteins, regulating their distribution in lipid rafts, affecting their interaction with other binding partners, and subsequently modulating striatal functions (PubMed:31455764).</text>
</comment>
<comment type="catalytic activity">
    <reaction evidence="4">
        <text>a ganglioside GM3 (d18:1(4E)) + CMP-N-acetyl-beta-neuraminate = a ganglioside GD3 (d18:1(4E)) + CMP + H(+)</text>
        <dbReference type="Rhea" id="RHEA:41760"/>
        <dbReference type="ChEBI" id="CHEBI:15378"/>
        <dbReference type="ChEBI" id="CHEBI:57812"/>
        <dbReference type="ChEBI" id="CHEBI:60065"/>
        <dbReference type="ChEBI" id="CHEBI:60377"/>
        <dbReference type="ChEBI" id="CHEBI:78436"/>
    </reaction>
    <physiologicalReaction direction="left-to-right" evidence="4">
        <dbReference type="Rhea" id="RHEA:41761"/>
    </physiologicalReaction>
</comment>
<comment type="catalytic activity">
    <reaction evidence="4">
        <text>a ganglioside GM3 + CMP-N-acetyl-beta-neuraminate = a ganglioside GD3 + CMP + H(+)</text>
        <dbReference type="Rhea" id="RHEA:48288"/>
        <dbReference type="ChEBI" id="CHEBI:15378"/>
        <dbReference type="ChEBI" id="CHEBI:57812"/>
        <dbReference type="ChEBI" id="CHEBI:60377"/>
        <dbReference type="ChEBI" id="CHEBI:79210"/>
        <dbReference type="ChEBI" id="CHEBI:79214"/>
    </reaction>
    <physiologicalReaction direction="left-to-right" evidence="4">
        <dbReference type="Rhea" id="RHEA:48289"/>
    </physiologicalReaction>
</comment>
<comment type="catalytic activity">
    <reaction evidence="4">
        <text>an N-acetyl-alpha-neuraminyl-(2-&gt;3)-beta-D-galactosyl derivative + CMP-N-acetyl-beta-neuraminate = an N-acetyl-alpha-neuraminyl-(2-&gt;8)-N-acetyl-alpha-neuraminyl-(2-&gt;3)-beta-D-galactosyl derivative + CMP + H(+)</text>
        <dbReference type="Rhea" id="RHEA:19313"/>
        <dbReference type="ChEBI" id="CHEBI:15378"/>
        <dbReference type="ChEBI" id="CHEBI:57812"/>
        <dbReference type="ChEBI" id="CHEBI:60377"/>
        <dbReference type="ChEBI" id="CHEBI:140308"/>
        <dbReference type="ChEBI" id="CHEBI:140309"/>
        <dbReference type="EC" id="2.4.3.8"/>
    </reaction>
    <physiologicalReaction direction="left-to-right" evidence="4">
        <dbReference type="Rhea" id="RHEA:19314"/>
    </physiologicalReaction>
</comment>
<comment type="catalytic activity">
    <reaction evidence="4">
        <text>an N-acetyl-alpha-neuraminyl-(2-&gt;3)-beta-D-galactosyl-(1-&gt;4)-N-acetyl-beta-D-glucosaminyl derivative + CMP-N-acetyl-beta-neuraminate = an alpha-Neu5Ac-(2-&gt;8)-alpha-Neu5Ac-(2-&gt;3)-beta-D-Gal-(1-&gt;4)-beta-D-GlcNAc derivative + CMP + H(+)</text>
        <dbReference type="Rhea" id="RHEA:77387"/>
        <dbReference type="ChEBI" id="CHEBI:15378"/>
        <dbReference type="ChEBI" id="CHEBI:57812"/>
        <dbReference type="ChEBI" id="CHEBI:60377"/>
        <dbReference type="ChEBI" id="CHEBI:136545"/>
        <dbReference type="ChEBI" id="CHEBI:197334"/>
    </reaction>
    <physiologicalReaction direction="left-to-right" evidence="4">
        <dbReference type="Rhea" id="RHEA:77388"/>
    </physiologicalReaction>
</comment>
<comment type="biophysicochemical properties">
    <kinetics>
        <KM evidence="4">0.082 mM for a neolactoside IV3-alpha-NeuAc-nLc4Cer</KM>
        <KM evidence="4">0.588 mM for ganglioside GM3</KM>
        <KM evidence="4">3.3 mM for Ganglioside GD3 (d18:1/16:0)</KM>
        <KM evidence="4">0.02 mM for fetuin (FETUB or AHSG)</KM>
    </kinetics>
</comment>
<comment type="pathway">
    <text evidence="4">Protein modification; protein glycosylation.</text>
</comment>
<comment type="subunit">
    <text evidence="1">Homodimer.</text>
</comment>
<comment type="subcellular location">
    <subcellularLocation>
        <location evidence="1">Golgi apparatus membrane</location>
        <topology evidence="1">Single-pass type II membrane protein</topology>
    </subcellularLocation>
</comment>
<comment type="tissue specificity">
    <text evidence="3 4">Expressed in neurons in brain with higher expression in the striatum than in the hippocampus, cortex, and cerebellum (at protein level) (PubMed:31455764, PubMed:7782326). Expressed in testes (PubMed:7782326).</text>
</comment>
<comment type="developmental stage">
    <text evidence="4">Expressed first in 20 dpc fetal brain and decreases thereafter during development.</text>
</comment>
<comment type="similarity">
    <text evidence="6">Belongs to the glycosyltransferase 29 family.</text>
</comment>
<comment type="online information" name="Functional Glycomics Gateway - GTase">
    <link uri="http://www.functionalglycomics.org/glycomics/molecule/jsp/glycoEnzyme/viewGlycoEnzyme.jsp?gbpId=gt_mou_658"/>
    <text>ST8Sia III</text>
</comment>
<gene>
    <name evidence="7" type="primary">St8sia3</name>
    <name type="synonym">Siat8c</name>
</gene>